<feature type="chain" id="PRO_0000454811" description="Protein CADMIUM TOLERANCE 1">
    <location>
        <begin position="1"/>
        <end position="55"/>
    </location>
</feature>
<feature type="transmembrane region" description="Helical" evidence="2">
    <location>
        <begin position="24"/>
        <end position="40"/>
    </location>
</feature>
<keyword id="KW-1003">Cell membrane</keyword>
<keyword id="KW-0134">Cell wall</keyword>
<keyword id="KW-0472">Membrane</keyword>
<keyword id="KW-0479">Metal-binding</keyword>
<keyword id="KW-0964">Secreted</keyword>
<keyword id="KW-0346">Stress response</keyword>
<keyword id="KW-0812">Transmembrane</keyword>
<keyword id="KW-1133">Transmembrane helix</keyword>
<sequence length="55" mass="6415">MYNAPPPQDMSYYDHCQRRHEEKGCLYACIFTALCCFCCYETCECCLDCLCCCCN</sequence>
<evidence type="ECO:0000250" key="1">
    <source>
        <dbReference type="UniProtKB" id="A9ZPI1"/>
    </source>
</evidence>
<evidence type="ECO:0000255" key="2"/>
<evidence type="ECO:0000303" key="3">
    <source>
    </source>
</evidence>
<evidence type="ECO:0000305" key="4"/>
<comment type="function">
    <text evidence="1">Confers resistance to heavy metal ions (e.g. cadmium (CdCl(2)) and copper (CuCl(2))) by chelating them at the plasma membrane of root cells, thus stopping their entry and reducing their accumulation.</text>
</comment>
<comment type="subcellular location">
    <subcellularLocation>
        <location evidence="1">Cell membrane</location>
        <topology evidence="2">Single-pass membrane protein</topology>
    </subcellularLocation>
    <subcellularLocation>
        <location evidence="1">Secreted</location>
        <location evidence="1">Cell wall</location>
    </subcellularLocation>
</comment>
<comment type="similarity">
    <text evidence="4">Belongs to the CYSTM1 family.</text>
</comment>
<proteinExistence type="inferred from homology"/>
<gene>
    <name evidence="3" type="primary">CDT1</name>
</gene>
<name>CDT1_ECHCC</name>
<accession>B5BSU1</accession>
<protein>
    <recommendedName>
        <fullName evidence="3">Protein CADMIUM TOLERANCE 1</fullName>
        <shortName evidence="3">Cd tolerant 1</shortName>
        <shortName evidence="3">EcCDT1</shortName>
    </recommendedName>
</protein>
<organism>
    <name type="scientific">Echinochloa crus-galli subsp. caudata</name>
    <name type="common">Cockspur</name>
    <name type="synonym">Echinochloa caudata</name>
    <dbReference type="NCBI Taxonomy" id="227868"/>
    <lineage>
        <taxon>Eukaryota</taxon>
        <taxon>Viridiplantae</taxon>
        <taxon>Streptophyta</taxon>
        <taxon>Embryophyta</taxon>
        <taxon>Tracheophyta</taxon>
        <taxon>Spermatophyta</taxon>
        <taxon>Magnoliopsida</taxon>
        <taxon>Liliopsida</taxon>
        <taxon>Poales</taxon>
        <taxon>Poaceae</taxon>
        <taxon>PACMAD clade</taxon>
        <taxon>Panicoideae</taxon>
        <taxon>Panicodae</taxon>
        <taxon>Paniceae</taxon>
        <taxon>Boivinellinae</taxon>
        <taxon>Echinochloa</taxon>
    </lineage>
</organism>
<dbReference type="EMBL" id="AB426477">
    <property type="protein sequence ID" value="BAG70355.1"/>
    <property type="molecule type" value="mRNA"/>
</dbReference>
<dbReference type="GO" id="GO:0005576">
    <property type="term" value="C:extracellular region"/>
    <property type="evidence" value="ECO:0007669"/>
    <property type="project" value="UniProtKB-KW"/>
</dbReference>
<dbReference type="GO" id="GO:0009505">
    <property type="term" value="C:plant-type cell wall"/>
    <property type="evidence" value="ECO:0000250"/>
    <property type="project" value="UniProtKB"/>
</dbReference>
<dbReference type="GO" id="GO:0005886">
    <property type="term" value="C:plasma membrane"/>
    <property type="evidence" value="ECO:0000250"/>
    <property type="project" value="UniProtKB"/>
</dbReference>
<dbReference type="GO" id="GO:0046872">
    <property type="term" value="F:metal ion binding"/>
    <property type="evidence" value="ECO:0000250"/>
    <property type="project" value="UniProtKB"/>
</dbReference>
<dbReference type="GO" id="GO:0140487">
    <property type="term" value="F:metal ion sequestering activity"/>
    <property type="evidence" value="ECO:0000250"/>
    <property type="project" value="UniProtKB"/>
</dbReference>
<dbReference type="GO" id="GO:1990748">
    <property type="term" value="P:cellular detoxification"/>
    <property type="evidence" value="ECO:0000250"/>
    <property type="project" value="UniProtKB"/>
</dbReference>
<dbReference type="GO" id="GO:0071585">
    <property type="term" value="P:detoxification of cadmium ion"/>
    <property type="evidence" value="ECO:0000250"/>
    <property type="project" value="UniProtKB"/>
</dbReference>
<dbReference type="GO" id="GO:0010273">
    <property type="term" value="P:detoxification of copper ion"/>
    <property type="evidence" value="ECO:0000250"/>
    <property type="project" value="UniProtKB"/>
</dbReference>
<dbReference type="InterPro" id="IPR051671">
    <property type="entry name" value="CYSTM1_HM_Tolerance"/>
</dbReference>
<dbReference type="InterPro" id="IPR028144">
    <property type="entry name" value="CYSTM_dom"/>
</dbReference>
<dbReference type="PANTHER" id="PTHR35470">
    <property type="entry name" value="CADMIUM TOLERANT 3"/>
    <property type="match status" value="1"/>
</dbReference>
<dbReference type="PANTHER" id="PTHR35470:SF12">
    <property type="entry name" value="PROTEIN CADMIUM TOLERANCE 1"/>
    <property type="match status" value="1"/>
</dbReference>
<dbReference type="Pfam" id="PF12734">
    <property type="entry name" value="CYSTM"/>
    <property type="match status" value="1"/>
</dbReference>
<reference key="1">
    <citation type="journal article" date="2009" name="Plant Cell Physiol.">
        <title>Novel cysteine-rich peptides from Digitaria ciliaris and Oryza sativa enhance tolerance to cadmium by limiting its cellular accumulation.</title>
        <authorList>
            <person name="Kuramata M."/>
            <person name="Masuya S."/>
            <person name="Takahashi Y."/>
            <person name="Kitagawa E."/>
            <person name="Inoue C."/>
            <person name="Ishikawa S."/>
            <person name="Youssefian S."/>
            <person name="Kusano T."/>
        </authorList>
    </citation>
    <scope>NUCLEOTIDE SEQUENCE [MRNA]</scope>
    <scope>GENE FAMILY</scope>
    <scope>NOMENCLATURE</scope>
</reference>
<reference key="2">
    <citation type="journal article" date="2009" name="Plant Signal. Behav.">
        <title>A novel plant cysteine-rich peptide family conferring cadmium tolerance to yeast and plants.</title>
        <authorList>
            <person name="Matsuda T."/>
            <person name="Kuramata M."/>
            <person name="Takahashi Y."/>
            <person name="Kitagawa E."/>
            <person name="Youssefian S."/>
            <person name="Kusano T."/>
        </authorList>
    </citation>
    <scope>GENE FAMILY</scope>
</reference>